<name>RS13_KOSOT</name>
<proteinExistence type="inferred from homology"/>
<accession>C5CGH7</accession>
<protein>
    <recommendedName>
        <fullName evidence="1">Small ribosomal subunit protein uS13</fullName>
    </recommendedName>
    <alternativeName>
        <fullName evidence="3">30S ribosomal protein S13</fullName>
    </alternativeName>
</protein>
<evidence type="ECO:0000255" key="1">
    <source>
        <dbReference type="HAMAP-Rule" id="MF_01315"/>
    </source>
</evidence>
<evidence type="ECO:0000256" key="2">
    <source>
        <dbReference type="SAM" id="MobiDB-lite"/>
    </source>
</evidence>
<evidence type="ECO:0000305" key="3"/>
<feature type="chain" id="PRO_1000214399" description="Small ribosomal subunit protein uS13">
    <location>
        <begin position="1"/>
        <end position="121"/>
    </location>
</feature>
<feature type="region of interest" description="Disordered" evidence="2">
    <location>
        <begin position="97"/>
        <end position="121"/>
    </location>
</feature>
<feature type="compositionally biased region" description="Basic residues" evidence="2">
    <location>
        <begin position="101"/>
        <end position="121"/>
    </location>
</feature>
<keyword id="KW-1185">Reference proteome</keyword>
<keyword id="KW-0687">Ribonucleoprotein</keyword>
<keyword id="KW-0689">Ribosomal protein</keyword>
<keyword id="KW-0694">RNA-binding</keyword>
<keyword id="KW-0699">rRNA-binding</keyword>
<keyword id="KW-0820">tRNA-binding</keyword>
<comment type="function">
    <text evidence="1">Located at the top of the head of the 30S subunit, it contacts several helices of the 16S rRNA. In the 70S ribosome it contacts the 23S rRNA (bridge B1a) and protein L5 of the 50S subunit (bridge B1b), connecting the 2 subunits; these bridges are implicated in subunit movement. Contacts the tRNAs in the A and P-sites.</text>
</comment>
<comment type="subunit">
    <text evidence="1">Part of the 30S ribosomal subunit. Forms a loose heterodimer with protein S19. Forms two bridges to the 50S subunit in the 70S ribosome.</text>
</comment>
<comment type="similarity">
    <text evidence="1">Belongs to the universal ribosomal protein uS13 family.</text>
</comment>
<dbReference type="EMBL" id="CP001634">
    <property type="protein sequence ID" value="ACR80558.1"/>
    <property type="molecule type" value="Genomic_DNA"/>
</dbReference>
<dbReference type="RefSeq" id="WP_015869201.1">
    <property type="nucleotide sequence ID" value="NC_012785.1"/>
</dbReference>
<dbReference type="SMR" id="C5CGH7"/>
<dbReference type="STRING" id="521045.Kole_1877"/>
<dbReference type="KEGG" id="kol:Kole_1877"/>
<dbReference type="eggNOG" id="COG0099">
    <property type="taxonomic scope" value="Bacteria"/>
</dbReference>
<dbReference type="HOGENOM" id="CLU_103849_1_2_0"/>
<dbReference type="OrthoDB" id="9803610at2"/>
<dbReference type="Proteomes" id="UP000002382">
    <property type="component" value="Chromosome"/>
</dbReference>
<dbReference type="GO" id="GO:0005829">
    <property type="term" value="C:cytosol"/>
    <property type="evidence" value="ECO:0007669"/>
    <property type="project" value="TreeGrafter"/>
</dbReference>
<dbReference type="GO" id="GO:0015935">
    <property type="term" value="C:small ribosomal subunit"/>
    <property type="evidence" value="ECO:0007669"/>
    <property type="project" value="TreeGrafter"/>
</dbReference>
<dbReference type="GO" id="GO:0019843">
    <property type="term" value="F:rRNA binding"/>
    <property type="evidence" value="ECO:0007669"/>
    <property type="project" value="UniProtKB-UniRule"/>
</dbReference>
<dbReference type="GO" id="GO:0003735">
    <property type="term" value="F:structural constituent of ribosome"/>
    <property type="evidence" value="ECO:0007669"/>
    <property type="project" value="InterPro"/>
</dbReference>
<dbReference type="GO" id="GO:0000049">
    <property type="term" value="F:tRNA binding"/>
    <property type="evidence" value="ECO:0007669"/>
    <property type="project" value="UniProtKB-UniRule"/>
</dbReference>
<dbReference type="GO" id="GO:0006412">
    <property type="term" value="P:translation"/>
    <property type="evidence" value="ECO:0007669"/>
    <property type="project" value="UniProtKB-UniRule"/>
</dbReference>
<dbReference type="FunFam" id="1.10.8.50:FF:000001">
    <property type="entry name" value="30S ribosomal protein S13"/>
    <property type="match status" value="1"/>
</dbReference>
<dbReference type="FunFam" id="4.10.910.10:FF:000001">
    <property type="entry name" value="30S ribosomal protein S13"/>
    <property type="match status" value="1"/>
</dbReference>
<dbReference type="Gene3D" id="1.10.8.50">
    <property type="match status" value="1"/>
</dbReference>
<dbReference type="Gene3D" id="4.10.910.10">
    <property type="entry name" value="30s ribosomal protein s13, domain 2"/>
    <property type="match status" value="1"/>
</dbReference>
<dbReference type="HAMAP" id="MF_01315">
    <property type="entry name" value="Ribosomal_uS13"/>
    <property type="match status" value="1"/>
</dbReference>
<dbReference type="InterPro" id="IPR027437">
    <property type="entry name" value="Rbsml_uS13_C"/>
</dbReference>
<dbReference type="InterPro" id="IPR001892">
    <property type="entry name" value="Ribosomal_uS13"/>
</dbReference>
<dbReference type="InterPro" id="IPR010979">
    <property type="entry name" value="Ribosomal_uS13-like_H2TH"/>
</dbReference>
<dbReference type="InterPro" id="IPR019980">
    <property type="entry name" value="Ribosomal_uS13_bac-type"/>
</dbReference>
<dbReference type="InterPro" id="IPR018269">
    <property type="entry name" value="Ribosomal_uS13_CS"/>
</dbReference>
<dbReference type="NCBIfam" id="TIGR03631">
    <property type="entry name" value="uS13_bact"/>
    <property type="match status" value="1"/>
</dbReference>
<dbReference type="PANTHER" id="PTHR10871">
    <property type="entry name" value="30S RIBOSOMAL PROTEIN S13/40S RIBOSOMAL PROTEIN S18"/>
    <property type="match status" value="1"/>
</dbReference>
<dbReference type="PANTHER" id="PTHR10871:SF1">
    <property type="entry name" value="SMALL RIBOSOMAL SUBUNIT PROTEIN US13M"/>
    <property type="match status" value="1"/>
</dbReference>
<dbReference type="Pfam" id="PF00416">
    <property type="entry name" value="Ribosomal_S13"/>
    <property type="match status" value="1"/>
</dbReference>
<dbReference type="PIRSF" id="PIRSF002134">
    <property type="entry name" value="Ribosomal_S13"/>
    <property type="match status" value="1"/>
</dbReference>
<dbReference type="SUPFAM" id="SSF46946">
    <property type="entry name" value="S13-like H2TH domain"/>
    <property type="match status" value="1"/>
</dbReference>
<dbReference type="PROSITE" id="PS00646">
    <property type="entry name" value="RIBOSOMAL_S13_1"/>
    <property type="match status" value="1"/>
</dbReference>
<dbReference type="PROSITE" id="PS50159">
    <property type="entry name" value="RIBOSOMAL_S13_2"/>
    <property type="match status" value="1"/>
</dbReference>
<reference key="1">
    <citation type="submission" date="2009-06" db="EMBL/GenBank/DDBJ databases">
        <title>Complete sequence of Thermotogales bacterium TBF 19.5.1.</title>
        <authorList>
            <consortium name="US DOE Joint Genome Institute"/>
            <person name="Lucas S."/>
            <person name="Copeland A."/>
            <person name="Lapidus A."/>
            <person name="Glavina del Rio T."/>
            <person name="Tice H."/>
            <person name="Bruce D."/>
            <person name="Goodwin L."/>
            <person name="Pitluck S."/>
            <person name="Chertkov O."/>
            <person name="Brettin T."/>
            <person name="Detter J.C."/>
            <person name="Han C."/>
            <person name="Schmutz J."/>
            <person name="Larimer F."/>
            <person name="Land M."/>
            <person name="Hauser L."/>
            <person name="Kyrpides N."/>
            <person name="Ovchinnikova G."/>
            <person name="Noll K."/>
        </authorList>
    </citation>
    <scope>NUCLEOTIDE SEQUENCE [LARGE SCALE GENOMIC DNA]</scope>
    <source>
        <strain>ATCC BAA-1733 / DSM 21960 / TBF 19.5.1</strain>
    </source>
</reference>
<gene>
    <name evidence="1" type="primary">rpsM</name>
    <name type="ordered locus">Kole_1877</name>
</gene>
<organism>
    <name type="scientific">Kosmotoga olearia (strain ATCC BAA-1733 / DSM 21960 / TBF 19.5.1)</name>
    <dbReference type="NCBI Taxonomy" id="521045"/>
    <lineage>
        <taxon>Bacteria</taxon>
        <taxon>Thermotogati</taxon>
        <taxon>Thermotogota</taxon>
        <taxon>Thermotogae</taxon>
        <taxon>Kosmotogales</taxon>
        <taxon>Kosmotogaceae</taxon>
        <taxon>Kosmotoga</taxon>
    </lineage>
</organism>
<sequence>MARIVGVELPNNKKTFVALTYIYGIGPARAKEILKNTNIDGDKRVKDLTDEEISRISKYITDHYKVEGELRQEVERNIKRLIEIGCYRGIRHKIGLPVRGQKTHSNARTRKGPRASRIKKK</sequence>